<feature type="chain" id="PRO_0000169214" description="Uncharacterized protein YfdT">
    <location>
        <begin position="1"/>
        <end position="101"/>
    </location>
</feature>
<organism>
    <name type="scientific">Shigella flexneri</name>
    <dbReference type="NCBI Taxonomy" id="623"/>
    <lineage>
        <taxon>Bacteria</taxon>
        <taxon>Pseudomonadati</taxon>
        <taxon>Pseudomonadota</taxon>
        <taxon>Gammaproteobacteria</taxon>
        <taxon>Enterobacterales</taxon>
        <taxon>Enterobacteriaceae</taxon>
        <taxon>Shigella</taxon>
    </lineage>
</organism>
<name>YFDT_SHIFL</name>
<proteinExistence type="predicted"/>
<dbReference type="EMBL" id="AE005674">
    <property type="protein sequence ID" value="AAN41957.1"/>
    <property type="molecule type" value="Genomic_DNA"/>
</dbReference>
<dbReference type="RefSeq" id="NP_706250.1">
    <property type="nucleotide sequence ID" value="NC_004337.2"/>
</dbReference>
<dbReference type="RefSeq" id="WP_000206732.1">
    <property type="nucleotide sequence ID" value="NZ_WPGI01000263.1"/>
</dbReference>
<dbReference type="SMR" id="P59193"/>
<dbReference type="STRING" id="198214.SF0298"/>
<dbReference type="PaxDb" id="198214-SF0298"/>
<dbReference type="GeneID" id="1027624"/>
<dbReference type="KEGG" id="sfl:SF0298"/>
<dbReference type="PATRIC" id="fig|198214.7.peg.340"/>
<dbReference type="HOGENOM" id="CLU_046529_10_3_6"/>
<dbReference type="Proteomes" id="UP000001006">
    <property type="component" value="Chromosome"/>
</dbReference>
<keyword id="KW-1185">Reference proteome</keyword>
<gene>
    <name type="primary">yfdT</name>
    <name type="ordered locus">SF0298</name>
</gene>
<accession>P59193</accession>
<sequence>MTTFTDKELIKEIKERISSLDVRDDIERRAYEIALLSLEVEPDEREAYELFMEKRFGDLVDRRRAKNGDNEYMAWDMTLGWIVWQQRAGIHFSTMSQQEVK</sequence>
<reference key="1">
    <citation type="journal article" date="2002" name="Nucleic Acids Res.">
        <title>Genome sequence of Shigella flexneri 2a: insights into pathogenicity through comparison with genomes of Escherichia coli K12 and O157.</title>
        <authorList>
            <person name="Jin Q."/>
            <person name="Yuan Z."/>
            <person name="Xu J."/>
            <person name="Wang Y."/>
            <person name="Shen Y."/>
            <person name="Lu W."/>
            <person name="Wang J."/>
            <person name="Liu H."/>
            <person name="Yang J."/>
            <person name="Yang F."/>
            <person name="Zhang X."/>
            <person name="Zhang J."/>
            <person name="Yang G."/>
            <person name="Wu H."/>
            <person name="Qu D."/>
            <person name="Dong J."/>
            <person name="Sun L."/>
            <person name="Xue Y."/>
            <person name="Zhao A."/>
            <person name="Gao Y."/>
            <person name="Zhu J."/>
            <person name="Kan B."/>
            <person name="Ding K."/>
            <person name="Chen S."/>
            <person name="Cheng H."/>
            <person name="Yao Z."/>
            <person name="He B."/>
            <person name="Chen R."/>
            <person name="Ma D."/>
            <person name="Qiang B."/>
            <person name="Wen Y."/>
            <person name="Hou Y."/>
            <person name="Yu J."/>
        </authorList>
    </citation>
    <scope>NUCLEOTIDE SEQUENCE [LARGE SCALE GENOMIC DNA]</scope>
    <source>
        <strain>301 / Serotype 2a</strain>
    </source>
</reference>
<protein>
    <recommendedName>
        <fullName>Uncharacterized protein YfdT</fullName>
    </recommendedName>
</protein>